<proteinExistence type="inferred from homology"/>
<accession>A8EZV1</accession>
<feature type="chain" id="PRO_1000067887" description="Large ribosomal subunit protein bL21">
    <location>
        <begin position="1"/>
        <end position="105"/>
    </location>
</feature>
<gene>
    <name evidence="1" type="primary">rplU</name>
    <name type="ordered locus">A1E_04815</name>
</gene>
<reference key="1">
    <citation type="submission" date="2007-09" db="EMBL/GenBank/DDBJ databases">
        <title>Complete genome sequence of Rickettsia canadensis.</title>
        <authorList>
            <person name="Madan A."/>
            <person name="Fahey J."/>
            <person name="Helton E."/>
            <person name="Ketteman M."/>
            <person name="Madan A."/>
            <person name="Rodrigues S."/>
            <person name="Sanchez A."/>
            <person name="Whiting M."/>
            <person name="Dasch G."/>
            <person name="Eremeeva M."/>
        </authorList>
    </citation>
    <scope>NUCLEOTIDE SEQUENCE [LARGE SCALE GENOMIC DNA]</scope>
    <source>
        <strain>McKiel</strain>
    </source>
</reference>
<organism>
    <name type="scientific">Rickettsia canadensis (strain McKiel)</name>
    <dbReference type="NCBI Taxonomy" id="293613"/>
    <lineage>
        <taxon>Bacteria</taxon>
        <taxon>Pseudomonadati</taxon>
        <taxon>Pseudomonadota</taxon>
        <taxon>Alphaproteobacteria</taxon>
        <taxon>Rickettsiales</taxon>
        <taxon>Rickettsiaceae</taxon>
        <taxon>Rickettsieae</taxon>
        <taxon>Rickettsia</taxon>
        <taxon>belli group</taxon>
    </lineage>
</organism>
<name>RL21_RICCK</name>
<evidence type="ECO:0000255" key="1">
    <source>
        <dbReference type="HAMAP-Rule" id="MF_01363"/>
    </source>
</evidence>
<evidence type="ECO:0000305" key="2"/>
<dbReference type="EMBL" id="CP000409">
    <property type="protein sequence ID" value="ABV73884.1"/>
    <property type="molecule type" value="Genomic_DNA"/>
</dbReference>
<dbReference type="RefSeq" id="WP_012149079.1">
    <property type="nucleotide sequence ID" value="NC_009879.1"/>
</dbReference>
<dbReference type="SMR" id="A8EZV1"/>
<dbReference type="STRING" id="293613.A1E_04815"/>
<dbReference type="KEGG" id="rcm:A1E_04815"/>
<dbReference type="eggNOG" id="COG0261">
    <property type="taxonomic scope" value="Bacteria"/>
</dbReference>
<dbReference type="HOGENOM" id="CLU_061463_3_2_5"/>
<dbReference type="Proteomes" id="UP000007056">
    <property type="component" value="Chromosome"/>
</dbReference>
<dbReference type="GO" id="GO:0005737">
    <property type="term" value="C:cytoplasm"/>
    <property type="evidence" value="ECO:0007669"/>
    <property type="project" value="UniProtKB-ARBA"/>
</dbReference>
<dbReference type="GO" id="GO:1990904">
    <property type="term" value="C:ribonucleoprotein complex"/>
    <property type="evidence" value="ECO:0007669"/>
    <property type="project" value="UniProtKB-KW"/>
</dbReference>
<dbReference type="GO" id="GO:0005840">
    <property type="term" value="C:ribosome"/>
    <property type="evidence" value="ECO:0007669"/>
    <property type="project" value="UniProtKB-KW"/>
</dbReference>
<dbReference type="GO" id="GO:0019843">
    <property type="term" value="F:rRNA binding"/>
    <property type="evidence" value="ECO:0007669"/>
    <property type="project" value="UniProtKB-UniRule"/>
</dbReference>
<dbReference type="GO" id="GO:0003735">
    <property type="term" value="F:structural constituent of ribosome"/>
    <property type="evidence" value="ECO:0007669"/>
    <property type="project" value="InterPro"/>
</dbReference>
<dbReference type="GO" id="GO:0006412">
    <property type="term" value="P:translation"/>
    <property type="evidence" value="ECO:0007669"/>
    <property type="project" value="UniProtKB-UniRule"/>
</dbReference>
<dbReference type="HAMAP" id="MF_01363">
    <property type="entry name" value="Ribosomal_bL21"/>
    <property type="match status" value="1"/>
</dbReference>
<dbReference type="InterPro" id="IPR028909">
    <property type="entry name" value="bL21-like"/>
</dbReference>
<dbReference type="InterPro" id="IPR036164">
    <property type="entry name" value="bL21-like_sf"/>
</dbReference>
<dbReference type="InterPro" id="IPR001787">
    <property type="entry name" value="Ribosomal_bL21"/>
</dbReference>
<dbReference type="InterPro" id="IPR018258">
    <property type="entry name" value="Ribosomal_bL21_CS"/>
</dbReference>
<dbReference type="NCBIfam" id="TIGR00061">
    <property type="entry name" value="L21"/>
    <property type="match status" value="1"/>
</dbReference>
<dbReference type="PANTHER" id="PTHR21349">
    <property type="entry name" value="50S RIBOSOMAL PROTEIN L21"/>
    <property type="match status" value="1"/>
</dbReference>
<dbReference type="PANTHER" id="PTHR21349:SF0">
    <property type="entry name" value="LARGE RIBOSOMAL SUBUNIT PROTEIN BL21M"/>
    <property type="match status" value="1"/>
</dbReference>
<dbReference type="Pfam" id="PF00829">
    <property type="entry name" value="Ribosomal_L21p"/>
    <property type="match status" value="1"/>
</dbReference>
<dbReference type="SUPFAM" id="SSF141091">
    <property type="entry name" value="L21p-like"/>
    <property type="match status" value="1"/>
</dbReference>
<dbReference type="PROSITE" id="PS01169">
    <property type="entry name" value="RIBOSOMAL_L21"/>
    <property type="match status" value="1"/>
</dbReference>
<keyword id="KW-0687">Ribonucleoprotein</keyword>
<keyword id="KW-0689">Ribosomal protein</keyword>
<keyword id="KW-0694">RNA-binding</keyword>
<keyword id="KW-0699">rRNA-binding</keyword>
<comment type="function">
    <text evidence="1">This protein binds to 23S rRNA in the presence of protein L20.</text>
</comment>
<comment type="subunit">
    <text evidence="1">Part of the 50S ribosomal subunit. Contacts protein L20.</text>
</comment>
<comment type="similarity">
    <text evidence="1">Belongs to the bacterial ribosomal protein bL21 family.</text>
</comment>
<protein>
    <recommendedName>
        <fullName evidence="1">Large ribosomal subunit protein bL21</fullName>
    </recommendedName>
    <alternativeName>
        <fullName evidence="2">50S ribosomal protein L21</fullName>
    </alternativeName>
</protein>
<sequence length="105" mass="11990">MFAVIKAGGKQYKVDRNSVIKVEKIDGELGSKIQFDQILMIGEYSKPSFIGTPIVKGAVVTAEITNQLKDNKIIVFKKKRRKNYRRKAGHRQELTELKILDITKQ</sequence>